<accession>Q15118</accession>
<accession>B2R6T1</accession>
<accession>B7Z937</accession>
<accession>D3DPD8</accession>
<accession>E9PD65</accession>
<accession>Q308M4</accession>
<gene>
    <name type="primary">PDK1</name>
    <name type="synonym">PDHK1</name>
</gene>
<sequence>MRLARLLRGAALAGPGPGLRAAGFSRSFSSDSGSSPASERGVPGQVDFYARFSPSPLSMKQFLDFGSVNACEKTSFMFLRQELPVRLANIMKEISLLPDNLLRTPSVQLVQSWYIQSLQELLDFKDKSAEDAKAIYDFTDTVIRIRNRHNDVIPTMAQGVIEYKESFGVDPVTSQNVQYFLDRFYMSRISIRMLLNQHSLLFGGKGKGSPSHRKHIGSINPNCNVLEVIKDGYENARRLCDLYYINSPELELEELNAKSPGQPIQVVYVPSHLYHMVFELFKNAMRATMEHHANRGVYPPIQVHVTLGNEDLTVKMSDRGGGVPLRKIDRLFNYMYSTAPRPRVETSRAVPLAGFGYGLPISRLYAQYFQGDLKLYSLEGYGTDAVIYIKALSTDSIERLPVYNKAAWKHYNTNHEADDWCVPSREPKDMTTFRSA</sequence>
<comment type="function">
    <text evidence="7 8 10 11 13">Kinase that plays a key role in regulation of glucose and fatty acid metabolism and homeostasis via phosphorylation of the pyruvate dehydrogenase subunits PDHA1 and PDHA2 (PubMed:7499431, PubMed:18541534, PubMed:22195962, PubMed:26942675, PubMed:17683942). This inhibits pyruvate dehydrogenase activity, and thereby regulates metabolite flux through the tricarboxylic acid cycle, down-regulates aerobic respiration and inhibits the formation of acetyl-coenzyme A from pyruvate (PubMed:18541534, PubMed:22195962, PubMed:26942675). Plays an important role in cellular responses to hypoxia and is important for cell proliferation under hypoxia (PubMed:18541534, PubMed:22195962, PubMed:26942675).</text>
</comment>
<comment type="catalytic activity">
    <reaction evidence="7 10 11 13">
        <text>L-seryl-[pyruvate dehydrogenase E1 alpha subunit] + ATP = O-phospho-L-seryl-[pyruvate dehydrogenase E1 alpha subunit] + ADP + H(+)</text>
        <dbReference type="Rhea" id="RHEA:23052"/>
        <dbReference type="Rhea" id="RHEA-COMP:13689"/>
        <dbReference type="Rhea" id="RHEA-COMP:13690"/>
        <dbReference type="ChEBI" id="CHEBI:15378"/>
        <dbReference type="ChEBI" id="CHEBI:29999"/>
        <dbReference type="ChEBI" id="CHEBI:30616"/>
        <dbReference type="ChEBI" id="CHEBI:83421"/>
        <dbReference type="ChEBI" id="CHEBI:456216"/>
        <dbReference type="EC" id="2.7.11.2"/>
    </reaction>
</comment>
<comment type="activity regulation">
    <text evidence="7 11">Activity is enhanced by binding to the pyruvate dehydrogenase subunit DLAT. Inhibited by AZD7545; this compound interferes with DLAT binding and thereby inhibits kinase activity. Inhibited by dichloroacetate and radicicol (PubMed:17683942). Activated under hypoxic conditions by phosphoglycerate kinase PGK1-mediated phosphorylation at Thr-338 (PubMed:26942675).</text>
</comment>
<comment type="subunit">
    <text evidence="2 7 11">Homodimer, and heterodimer with PDK2 (PubMed:17683942). Interacts with the pyruvate dehydrogenase complex subunit DLAT, and is part of the multimeric pyruvate dehydrogenase complex that contains multiple copies of pyruvate dehydrogenase (E1), dihydrolipoamide acetyltransferase (DLAT, E2) and lipoamide dehydrogenase (DLD, E3) (By similarity). Interacts with phosphoglycerate kinase PGK1; the interaction is direct, occurs under hypoxic conditions and leads to PDK1-mediated inhibition of pyruvate dehydrogenase complex activity (PubMed:26942675).</text>
</comment>
<comment type="interaction">
    <interactant intactId="EBI-7016221">
        <id>Q15118</id>
    </interactant>
    <interactant intactId="EBI-77613">
        <id>P05067</id>
        <label>APP</label>
    </interactant>
    <organismsDiffer>false</organismsDiffer>
    <experiments>3</experiments>
</comment>
<comment type="interaction">
    <interactant intactId="EBI-7016221">
        <id>Q15118</id>
    </interactant>
    <interactant intactId="EBI-715747">
        <id>P08559</id>
        <label>PDHA1</label>
    </interactant>
    <organismsDiffer>false</organismsDiffer>
    <experiments>2</experiments>
</comment>
<comment type="interaction">
    <interactant intactId="EBI-7016221">
        <id>Q15118</id>
    </interactant>
    <interactant intactId="EBI-2511350">
        <id>Q16513</id>
        <label>PKN2</label>
    </interactant>
    <organismsDiffer>false</organismsDiffer>
    <experiments>6</experiments>
</comment>
<comment type="interaction">
    <interactant intactId="EBI-12562315">
        <id>Q15118-1</id>
    </interactant>
    <interactant intactId="EBI-12562306">
        <id>P31749-1</id>
        <label>AKT1</label>
    </interactant>
    <organismsDiffer>false</organismsDiffer>
    <experiments>2</experiments>
</comment>
<comment type="interaction">
    <interactant intactId="EBI-12562315">
        <id>Q15118-1</id>
    </interactant>
    <interactant intactId="EBI-12562336">
        <id>P31751-1</id>
        <label>AKT2</label>
    </interactant>
    <organismsDiffer>false</organismsDiffer>
    <experiments>2</experiments>
</comment>
<comment type="subcellular location">
    <subcellularLocation>
        <location evidence="10">Mitochondrion matrix</location>
    </subcellularLocation>
</comment>
<comment type="alternative products">
    <event type="alternative splicing"/>
    <isoform>
        <id>Q15118-1</id>
        <name>1</name>
        <sequence type="displayed"/>
    </isoform>
    <isoform>
        <id>Q15118-2</id>
        <name>2</name>
        <sequence type="described" ref="VSP_055172"/>
    </isoform>
</comment>
<comment type="tissue specificity">
    <text evidence="13">Expressed predominantly in the heart. Detected at lower levels in liver, skeletal muscle and pancreas.</text>
</comment>
<comment type="induction">
    <text evidence="9">Up-regulated via the HIF1A signaling pathway in response to hypoxia.</text>
</comment>
<comment type="PTM">
    <text evidence="10 11">Phosphorylated by constitutively activated ABL1, FGFR1, FLT3 and JAK2 (in vitro), and this may also occur in cancer cells that express constitutively activated ABL1, FGFR1, FLT3 and JAK2. Phosphorylation at Tyr-243 and Tyr-244 strongly increases kinase activity, while phosphorylation at Tyr-136 has a lesser effect (PubMed:22195962). Phosphorylated under hypoxic conditions at Thr-338 by phosphoglycerate kinase PGK1 which has an activating effect (PubMed:26942675).</text>
</comment>
<comment type="miscellaneous">
    <text evidence="12">Exposure of cancer cells to severe hypoxia induces translocation of AKT to the mitochondrion, leading to AKT-mediated phosphorylation of PDK1 at Thr-346 which supports tumor cell survival and proliferation during hypoxia.</text>
</comment>
<comment type="similarity">
    <text evidence="16">Belongs to the PDK/BCKDK protein kinase family.</text>
</comment>
<proteinExistence type="evidence at protein level"/>
<feature type="transit peptide" description="Mitochondrion" evidence="4 17">
    <location>
        <begin position="1"/>
        <end position="28"/>
    </location>
</feature>
<feature type="chain" id="PRO_0000023437" description="[Pyruvate dehydrogenase (acetyl-transferring)] kinase isozyme 1, mitochondrial">
    <location>
        <begin position="29"/>
        <end position="436"/>
    </location>
</feature>
<feature type="domain" description="Histidine kinase" evidence="5">
    <location>
        <begin position="163"/>
        <end position="393"/>
    </location>
</feature>
<feature type="binding site" evidence="1">
    <location>
        <begin position="279"/>
        <end position="286"/>
    </location>
    <ligand>
        <name>ATP</name>
        <dbReference type="ChEBI" id="CHEBI:30616"/>
    </ligand>
</feature>
<feature type="binding site" evidence="1">
    <location>
        <position position="318"/>
    </location>
    <ligand>
        <name>ATP</name>
        <dbReference type="ChEBI" id="CHEBI:30616"/>
    </ligand>
</feature>
<feature type="binding site" evidence="1">
    <location>
        <begin position="337"/>
        <end position="338"/>
    </location>
    <ligand>
        <name>ATP</name>
        <dbReference type="ChEBI" id="CHEBI:30616"/>
    </ligand>
</feature>
<feature type="binding site" evidence="1">
    <location>
        <begin position="354"/>
        <end position="359"/>
    </location>
    <ligand>
        <name>ATP</name>
        <dbReference type="ChEBI" id="CHEBI:30616"/>
    </ligand>
</feature>
<feature type="modified residue" description="Phosphotyrosine; by FGFR1" evidence="10">
    <location>
        <position position="136"/>
    </location>
</feature>
<feature type="modified residue" description="Phosphotyrosine; by FGFR1, ABL1, FLT3 and JAK2" evidence="10">
    <location>
        <position position="243"/>
    </location>
</feature>
<feature type="modified residue" description="Phosphotyrosine; by FGFR1" evidence="10">
    <location>
        <position position="244"/>
    </location>
</feature>
<feature type="modified residue" description="Phosphothreonine" evidence="11">
    <location>
        <position position="338"/>
    </location>
</feature>
<feature type="modified residue" description="N6-succinyllysine" evidence="3">
    <location>
        <position position="405"/>
    </location>
</feature>
<feature type="splice variant" id="VSP_055172" description="In isoform 2." evidence="14 15">
    <original>D</original>
    <variation>ERPRRTWLQVSSLCCMACKMI</variation>
    <location>
        <position position="137"/>
    </location>
</feature>
<feature type="sequence variant" id="VAR_050477" description="In dbSNP:rs35661499.">
    <original>A</original>
    <variation>T</variation>
    <location>
        <position position="134"/>
    </location>
</feature>
<feature type="sequence variant" id="VAR_042295" description="In dbSNP:rs34250425." evidence="6">
    <original>N</original>
    <variation>T</variation>
    <location>
        <position position="412"/>
    </location>
</feature>
<feature type="sequence conflict" description="In Ref. 3; ABB29979." evidence="16" ref="3">
    <original>R</original>
    <variation>L</variation>
    <location>
        <position position="8"/>
    </location>
</feature>
<feature type="sequence conflict" description="In Ref. 4; BAH14173." evidence="16" ref="4">
    <original>L</original>
    <variation>R</variation>
    <location>
        <position position="96"/>
    </location>
</feature>
<feature type="sequence conflict" description="In Ref. 3; ABB29979." evidence="16" ref="3">
    <original>R</original>
    <variation>C</variation>
    <location>
        <position position="363"/>
    </location>
</feature>
<feature type="helix" evidence="18">
    <location>
        <begin position="42"/>
        <end position="50"/>
    </location>
</feature>
<feature type="helix" evidence="18">
    <location>
        <begin position="59"/>
        <end position="67"/>
    </location>
</feature>
<feature type="helix" evidence="18">
    <location>
        <begin position="72"/>
        <end position="94"/>
    </location>
</feature>
<feature type="helix" evidence="18">
    <location>
        <begin position="99"/>
        <end position="102"/>
    </location>
</feature>
<feature type="helix" evidence="18">
    <location>
        <begin position="105"/>
        <end position="122"/>
    </location>
</feature>
<feature type="strand" evidence="18">
    <location>
        <begin position="125"/>
        <end position="127"/>
    </location>
</feature>
<feature type="helix" evidence="18">
    <location>
        <begin position="132"/>
        <end position="148"/>
    </location>
</feature>
<feature type="turn" evidence="18">
    <location>
        <begin position="149"/>
        <end position="151"/>
    </location>
</feature>
<feature type="helix" evidence="18">
    <location>
        <begin position="152"/>
        <end position="166"/>
    </location>
</feature>
<feature type="helix" evidence="18">
    <location>
        <begin position="171"/>
        <end position="202"/>
    </location>
</feature>
<feature type="strand" evidence="18">
    <location>
        <begin position="219"/>
        <end position="224"/>
    </location>
</feature>
<feature type="helix" evidence="18">
    <location>
        <begin position="225"/>
        <end position="244"/>
    </location>
</feature>
<feature type="strand" evidence="18">
    <location>
        <begin position="250"/>
        <end position="259"/>
    </location>
</feature>
<feature type="strand" evidence="18">
    <location>
        <begin position="265"/>
        <end position="268"/>
    </location>
</feature>
<feature type="helix" evidence="18">
    <location>
        <begin position="270"/>
        <end position="291"/>
    </location>
</feature>
<feature type="turn" evidence="18">
    <location>
        <begin position="293"/>
        <end position="295"/>
    </location>
</feature>
<feature type="strand" evidence="18">
    <location>
        <begin position="301"/>
        <end position="307"/>
    </location>
</feature>
<feature type="strand" evidence="18">
    <location>
        <begin position="309"/>
        <end position="318"/>
    </location>
</feature>
<feature type="helix" evidence="18">
    <location>
        <begin position="325"/>
        <end position="328"/>
    </location>
</feature>
<feature type="helix" evidence="18">
    <location>
        <begin position="329"/>
        <end position="332"/>
    </location>
</feature>
<feature type="turn" evidence="18">
    <location>
        <begin position="334"/>
        <end position="337"/>
    </location>
</feature>
<feature type="strand" evidence="19">
    <location>
        <begin position="352"/>
        <end position="354"/>
    </location>
</feature>
<feature type="helix" evidence="18">
    <location>
        <begin position="358"/>
        <end position="368"/>
    </location>
</feature>
<feature type="strand" evidence="18">
    <location>
        <begin position="372"/>
        <end position="378"/>
    </location>
</feature>
<feature type="turn" evidence="18">
    <location>
        <begin position="379"/>
        <end position="381"/>
    </location>
</feature>
<feature type="strand" evidence="18">
    <location>
        <begin position="382"/>
        <end position="392"/>
    </location>
</feature>
<feature type="turn" evidence="18">
    <location>
        <begin position="393"/>
        <end position="395"/>
    </location>
</feature>
<feature type="helix" evidence="18">
    <location>
        <begin position="405"/>
        <end position="411"/>
    </location>
</feature>
<protein>
    <recommendedName>
        <fullName>[Pyruvate dehydrogenase (acetyl-transferring)] kinase isozyme 1, mitochondrial</fullName>
        <ecNumber evidence="7 10 11 13">2.7.11.2</ecNumber>
    </recommendedName>
    <alternativeName>
        <fullName>Pyruvate dehydrogenase kinase isoform 1</fullName>
        <shortName>PDH kinase 1</shortName>
    </alternativeName>
</protein>
<evidence type="ECO:0000250" key="1"/>
<evidence type="ECO:0000250" key="2">
    <source>
        <dbReference type="UniProtKB" id="Q63065"/>
    </source>
</evidence>
<evidence type="ECO:0000250" key="3">
    <source>
        <dbReference type="UniProtKB" id="Q8BFP9"/>
    </source>
</evidence>
<evidence type="ECO:0000255" key="4"/>
<evidence type="ECO:0000255" key="5">
    <source>
        <dbReference type="PROSITE-ProRule" id="PRU00107"/>
    </source>
</evidence>
<evidence type="ECO:0000269" key="6">
    <source>
    </source>
</evidence>
<evidence type="ECO:0000269" key="7">
    <source>
    </source>
</evidence>
<evidence type="ECO:0000269" key="8">
    <source>
    </source>
</evidence>
<evidence type="ECO:0000269" key="9">
    <source>
    </source>
</evidence>
<evidence type="ECO:0000269" key="10">
    <source>
    </source>
</evidence>
<evidence type="ECO:0000269" key="11">
    <source>
    </source>
</evidence>
<evidence type="ECO:0000269" key="12">
    <source>
    </source>
</evidence>
<evidence type="ECO:0000269" key="13">
    <source>
    </source>
</evidence>
<evidence type="ECO:0000303" key="14">
    <source>
    </source>
</evidence>
<evidence type="ECO:0000303" key="15">
    <source ref="3"/>
</evidence>
<evidence type="ECO:0000305" key="16"/>
<evidence type="ECO:0007744" key="17">
    <source>
    </source>
</evidence>
<evidence type="ECO:0007829" key="18">
    <source>
        <dbReference type="PDB" id="2Q8G"/>
    </source>
</evidence>
<evidence type="ECO:0007829" key="19">
    <source>
        <dbReference type="PDB" id="2Q8H"/>
    </source>
</evidence>
<reference key="1">
    <citation type="journal article" date="1995" name="J. Biol. Chem.">
        <title>Diversity of the pyruvate dehydrogenase kinase gene family in humans.</title>
        <authorList>
            <person name="Gudi R."/>
            <person name="Bowker-Kinley M.M."/>
            <person name="Kedishvili N.Y."/>
            <person name="Zhao Y."/>
            <person name="Popov K.M."/>
        </authorList>
    </citation>
    <scope>NUCLEOTIDE SEQUENCE [MRNA] (ISOFORM 1)</scope>
    <scope>FUNCTION</scope>
    <scope>CATALYTIC ACTIVITY</scope>
    <scope>TISSUE SPECIFICITY</scope>
    <source>
        <tissue>Liver</tissue>
    </source>
</reference>
<reference key="2">
    <citation type="journal article" date="1995" name="J. Biol. Chem.">
        <title>Diversity of the pyruvate dehydrogenase kinase gene family in humans.</title>
        <authorList>
            <person name="Gudi R."/>
            <person name="Bowker-Kinley M.M."/>
            <person name="Kedishvili N.Y."/>
            <person name="Zhao Y."/>
            <person name="Popov K.M."/>
        </authorList>
    </citation>
    <scope>ERRATUM OF PUBMED:7499431</scope>
</reference>
<reference key="3">
    <citation type="submission" date="2005-10" db="EMBL/GenBank/DDBJ databases">
        <authorList>
            <person name="Li H."/>
            <person name="Nong W."/>
            <person name="Zhou G."/>
            <person name="Ke R."/>
            <person name="Shen C."/>
            <person name="Zhong G."/>
            <person name="Zheng Z."/>
            <person name="Liang M."/>
            <person name="Tang Z."/>
            <person name="Huang B."/>
            <person name="Lin L."/>
            <person name="Yang S."/>
        </authorList>
    </citation>
    <scope>NUCLEOTIDE SEQUENCE [MRNA] (ISOFORM 2)</scope>
</reference>
<reference key="4">
    <citation type="journal article" date="2004" name="Nat. Genet.">
        <title>Complete sequencing and characterization of 21,243 full-length human cDNAs.</title>
        <authorList>
            <person name="Ota T."/>
            <person name="Suzuki Y."/>
            <person name="Nishikawa T."/>
            <person name="Otsuki T."/>
            <person name="Sugiyama T."/>
            <person name="Irie R."/>
            <person name="Wakamatsu A."/>
            <person name="Hayashi K."/>
            <person name="Sato H."/>
            <person name="Nagai K."/>
            <person name="Kimura K."/>
            <person name="Makita H."/>
            <person name="Sekine M."/>
            <person name="Obayashi M."/>
            <person name="Nishi T."/>
            <person name="Shibahara T."/>
            <person name="Tanaka T."/>
            <person name="Ishii S."/>
            <person name="Yamamoto J."/>
            <person name="Saito K."/>
            <person name="Kawai Y."/>
            <person name="Isono Y."/>
            <person name="Nakamura Y."/>
            <person name="Nagahari K."/>
            <person name="Murakami K."/>
            <person name="Yasuda T."/>
            <person name="Iwayanagi T."/>
            <person name="Wagatsuma M."/>
            <person name="Shiratori A."/>
            <person name="Sudo H."/>
            <person name="Hosoiri T."/>
            <person name="Kaku Y."/>
            <person name="Kodaira H."/>
            <person name="Kondo H."/>
            <person name="Sugawara M."/>
            <person name="Takahashi M."/>
            <person name="Kanda K."/>
            <person name="Yokoi T."/>
            <person name="Furuya T."/>
            <person name="Kikkawa E."/>
            <person name="Omura Y."/>
            <person name="Abe K."/>
            <person name="Kamihara K."/>
            <person name="Katsuta N."/>
            <person name="Sato K."/>
            <person name="Tanikawa M."/>
            <person name="Yamazaki M."/>
            <person name="Ninomiya K."/>
            <person name="Ishibashi T."/>
            <person name="Yamashita H."/>
            <person name="Murakawa K."/>
            <person name="Fujimori K."/>
            <person name="Tanai H."/>
            <person name="Kimata M."/>
            <person name="Watanabe M."/>
            <person name="Hiraoka S."/>
            <person name="Chiba Y."/>
            <person name="Ishida S."/>
            <person name="Ono Y."/>
            <person name="Takiguchi S."/>
            <person name="Watanabe S."/>
            <person name="Yosida M."/>
            <person name="Hotuta T."/>
            <person name="Kusano J."/>
            <person name="Kanehori K."/>
            <person name="Takahashi-Fujii A."/>
            <person name="Hara H."/>
            <person name="Tanase T.-O."/>
            <person name="Nomura Y."/>
            <person name="Togiya S."/>
            <person name="Komai F."/>
            <person name="Hara R."/>
            <person name="Takeuchi K."/>
            <person name="Arita M."/>
            <person name="Imose N."/>
            <person name="Musashino K."/>
            <person name="Yuuki H."/>
            <person name="Oshima A."/>
            <person name="Sasaki N."/>
            <person name="Aotsuka S."/>
            <person name="Yoshikawa Y."/>
            <person name="Matsunawa H."/>
            <person name="Ichihara T."/>
            <person name="Shiohata N."/>
            <person name="Sano S."/>
            <person name="Moriya S."/>
            <person name="Momiyama H."/>
            <person name="Satoh N."/>
            <person name="Takami S."/>
            <person name="Terashima Y."/>
            <person name="Suzuki O."/>
            <person name="Nakagawa S."/>
            <person name="Senoh A."/>
            <person name="Mizoguchi H."/>
            <person name="Goto Y."/>
            <person name="Shimizu F."/>
            <person name="Wakebe H."/>
            <person name="Hishigaki H."/>
            <person name="Watanabe T."/>
            <person name="Sugiyama A."/>
            <person name="Takemoto M."/>
            <person name="Kawakami B."/>
            <person name="Yamazaki M."/>
            <person name="Watanabe K."/>
            <person name="Kumagai A."/>
            <person name="Itakura S."/>
            <person name="Fukuzumi Y."/>
            <person name="Fujimori Y."/>
            <person name="Komiyama M."/>
            <person name="Tashiro H."/>
            <person name="Tanigami A."/>
            <person name="Fujiwara T."/>
            <person name="Ono T."/>
            <person name="Yamada K."/>
            <person name="Fujii Y."/>
            <person name="Ozaki K."/>
            <person name="Hirao M."/>
            <person name="Ohmori Y."/>
            <person name="Kawabata A."/>
            <person name="Hikiji T."/>
            <person name="Kobatake N."/>
            <person name="Inagaki H."/>
            <person name="Ikema Y."/>
            <person name="Okamoto S."/>
            <person name="Okitani R."/>
            <person name="Kawakami T."/>
            <person name="Noguchi S."/>
            <person name="Itoh T."/>
            <person name="Shigeta K."/>
            <person name="Senba T."/>
            <person name="Matsumura K."/>
            <person name="Nakajima Y."/>
            <person name="Mizuno T."/>
            <person name="Morinaga M."/>
            <person name="Sasaki M."/>
            <person name="Togashi T."/>
            <person name="Oyama M."/>
            <person name="Hata H."/>
            <person name="Watanabe M."/>
            <person name="Komatsu T."/>
            <person name="Mizushima-Sugano J."/>
            <person name="Satoh T."/>
            <person name="Shirai Y."/>
            <person name="Takahashi Y."/>
            <person name="Nakagawa K."/>
            <person name="Okumura K."/>
            <person name="Nagase T."/>
            <person name="Nomura N."/>
            <person name="Kikuchi H."/>
            <person name="Masuho Y."/>
            <person name="Yamashita R."/>
            <person name="Nakai K."/>
            <person name="Yada T."/>
            <person name="Nakamura Y."/>
            <person name="Ohara O."/>
            <person name="Isogai T."/>
            <person name="Sugano S."/>
        </authorList>
    </citation>
    <scope>NUCLEOTIDE SEQUENCE [LARGE SCALE MRNA] (ISOFORMS 1 AND 2)</scope>
</reference>
<reference key="5">
    <citation type="journal article" date="2005" name="Nature">
        <title>Generation and annotation of the DNA sequences of human chromosomes 2 and 4.</title>
        <authorList>
            <person name="Hillier L.W."/>
            <person name="Graves T.A."/>
            <person name="Fulton R.S."/>
            <person name="Fulton L.A."/>
            <person name="Pepin K.H."/>
            <person name="Minx P."/>
            <person name="Wagner-McPherson C."/>
            <person name="Layman D."/>
            <person name="Wylie K."/>
            <person name="Sekhon M."/>
            <person name="Becker M.C."/>
            <person name="Fewell G.A."/>
            <person name="Delehaunty K.D."/>
            <person name="Miner T.L."/>
            <person name="Nash W.E."/>
            <person name="Kremitzki C."/>
            <person name="Oddy L."/>
            <person name="Du H."/>
            <person name="Sun H."/>
            <person name="Bradshaw-Cordum H."/>
            <person name="Ali J."/>
            <person name="Carter J."/>
            <person name="Cordes M."/>
            <person name="Harris A."/>
            <person name="Isak A."/>
            <person name="van Brunt A."/>
            <person name="Nguyen C."/>
            <person name="Du F."/>
            <person name="Courtney L."/>
            <person name="Kalicki J."/>
            <person name="Ozersky P."/>
            <person name="Abbott S."/>
            <person name="Armstrong J."/>
            <person name="Belter E.A."/>
            <person name="Caruso L."/>
            <person name="Cedroni M."/>
            <person name="Cotton M."/>
            <person name="Davidson T."/>
            <person name="Desai A."/>
            <person name="Elliott G."/>
            <person name="Erb T."/>
            <person name="Fronick C."/>
            <person name="Gaige T."/>
            <person name="Haakenson W."/>
            <person name="Haglund K."/>
            <person name="Holmes A."/>
            <person name="Harkins R."/>
            <person name="Kim K."/>
            <person name="Kruchowski S.S."/>
            <person name="Strong C.M."/>
            <person name="Grewal N."/>
            <person name="Goyea E."/>
            <person name="Hou S."/>
            <person name="Levy A."/>
            <person name="Martinka S."/>
            <person name="Mead K."/>
            <person name="McLellan M.D."/>
            <person name="Meyer R."/>
            <person name="Randall-Maher J."/>
            <person name="Tomlinson C."/>
            <person name="Dauphin-Kohlberg S."/>
            <person name="Kozlowicz-Reilly A."/>
            <person name="Shah N."/>
            <person name="Swearengen-Shahid S."/>
            <person name="Snider J."/>
            <person name="Strong J.T."/>
            <person name="Thompson J."/>
            <person name="Yoakum M."/>
            <person name="Leonard S."/>
            <person name="Pearman C."/>
            <person name="Trani L."/>
            <person name="Radionenko M."/>
            <person name="Waligorski J.E."/>
            <person name="Wang C."/>
            <person name="Rock S.M."/>
            <person name="Tin-Wollam A.-M."/>
            <person name="Maupin R."/>
            <person name="Latreille P."/>
            <person name="Wendl M.C."/>
            <person name="Yang S.-P."/>
            <person name="Pohl C."/>
            <person name="Wallis J.W."/>
            <person name="Spieth J."/>
            <person name="Bieri T.A."/>
            <person name="Berkowicz N."/>
            <person name="Nelson J.O."/>
            <person name="Osborne J."/>
            <person name="Ding L."/>
            <person name="Meyer R."/>
            <person name="Sabo A."/>
            <person name="Shotland Y."/>
            <person name="Sinha P."/>
            <person name="Wohldmann P.E."/>
            <person name="Cook L.L."/>
            <person name="Hickenbotham M.T."/>
            <person name="Eldred J."/>
            <person name="Williams D."/>
            <person name="Jones T.A."/>
            <person name="She X."/>
            <person name="Ciccarelli F.D."/>
            <person name="Izaurralde E."/>
            <person name="Taylor J."/>
            <person name="Schmutz J."/>
            <person name="Myers R.M."/>
            <person name="Cox D.R."/>
            <person name="Huang X."/>
            <person name="McPherson J.D."/>
            <person name="Mardis E.R."/>
            <person name="Clifton S.W."/>
            <person name="Warren W.C."/>
            <person name="Chinwalla A.T."/>
            <person name="Eddy S.R."/>
            <person name="Marra M.A."/>
            <person name="Ovcharenko I."/>
            <person name="Furey T.S."/>
            <person name="Miller W."/>
            <person name="Eichler E.E."/>
            <person name="Bork P."/>
            <person name="Suyama M."/>
            <person name="Torrents D."/>
            <person name="Waterston R.H."/>
            <person name="Wilson R.K."/>
        </authorList>
    </citation>
    <scope>NUCLEOTIDE SEQUENCE [LARGE SCALE GENOMIC DNA]</scope>
</reference>
<reference key="6">
    <citation type="submission" date="2005-09" db="EMBL/GenBank/DDBJ databases">
        <authorList>
            <person name="Mural R.J."/>
            <person name="Istrail S."/>
            <person name="Sutton G.G."/>
            <person name="Florea L."/>
            <person name="Halpern A.L."/>
            <person name="Mobarry C.M."/>
            <person name="Lippert R."/>
            <person name="Walenz B."/>
            <person name="Shatkay H."/>
            <person name="Dew I."/>
            <person name="Miller J.R."/>
            <person name="Flanigan M.J."/>
            <person name="Edwards N.J."/>
            <person name="Bolanos R."/>
            <person name="Fasulo D."/>
            <person name="Halldorsson B.V."/>
            <person name="Hannenhalli S."/>
            <person name="Turner R."/>
            <person name="Yooseph S."/>
            <person name="Lu F."/>
            <person name="Nusskern D.R."/>
            <person name="Shue B.C."/>
            <person name="Zheng X.H."/>
            <person name="Zhong F."/>
            <person name="Delcher A.L."/>
            <person name="Huson D.H."/>
            <person name="Kravitz S.A."/>
            <person name="Mouchard L."/>
            <person name="Reinert K."/>
            <person name="Remington K.A."/>
            <person name="Clark A.G."/>
            <person name="Waterman M.S."/>
            <person name="Eichler E.E."/>
            <person name="Adams M.D."/>
            <person name="Hunkapiller M.W."/>
            <person name="Myers E.W."/>
            <person name="Venter J.C."/>
        </authorList>
    </citation>
    <scope>NUCLEOTIDE SEQUENCE [LARGE SCALE GENOMIC DNA]</scope>
</reference>
<reference key="7">
    <citation type="journal article" date="2004" name="Genome Res.">
        <title>The status, quality, and expansion of the NIH full-length cDNA project: the Mammalian Gene Collection (MGC).</title>
        <authorList>
            <consortium name="The MGC Project Team"/>
        </authorList>
    </citation>
    <scope>NUCLEOTIDE SEQUENCE [LARGE SCALE MRNA] (ISOFORM 1)</scope>
    <source>
        <tissue>Skin</tissue>
    </source>
</reference>
<reference key="8">
    <citation type="journal article" date="2008" name="J. Biol. Chem.">
        <title>Pyruvate dehydrogenase complex activity controls metabolic and malignant phenotype in cancer cells.</title>
        <authorList>
            <person name="McFate T."/>
            <person name="Mohyeldin A."/>
            <person name="Lu H."/>
            <person name="Thakar J."/>
            <person name="Henriques J."/>
            <person name="Halim N.D."/>
            <person name="Wu H."/>
            <person name="Schell M.J."/>
            <person name="Tsang T.M."/>
            <person name="Teahan O."/>
            <person name="Zhou S."/>
            <person name="Califano J.A."/>
            <person name="Jeoung N.H."/>
            <person name="Harris R.A."/>
            <person name="Verma A."/>
        </authorList>
    </citation>
    <scope>FUNCTION</scope>
</reference>
<reference key="9">
    <citation type="journal article" date="2011" name="Am. J. Pathol.">
        <title>Overexpression of pyruvate dehydrogenase kinase 3 increases drug resistance and early recurrence in colon cancer.</title>
        <authorList>
            <person name="Lu C.W."/>
            <person name="Lin S.C."/>
            <person name="Chien C.W."/>
            <person name="Lin S.C."/>
            <person name="Lee C.T."/>
            <person name="Lin B.W."/>
            <person name="Lee J.C."/>
            <person name="Tsai S.J."/>
        </authorList>
    </citation>
    <scope>INDUCTION BY HYPOXIA</scope>
</reference>
<reference key="10">
    <citation type="journal article" date="2011" name="BMC Syst. Biol.">
        <title>Initial characterization of the human central proteome.</title>
        <authorList>
            <person name="Burkard T.R."/>
            <person name="Planyavsky M."/>
            <person name="Kaupe I."/>
            <person name="Breitwieser F.P."/>
            <person name="Buerckstuemmer T."/>
            <person name="Bennett K.L."/>
            <person name="Superti-Furga G."/>
            <person name="Colinge J."/>
        </authorList>
    </citation>
    <scope>IDENTIFICATION BY MASS SPECTROMETRY [LARGE SCALE ANALYSIS]</scope>
</reference>
<reference key="11">
    <citation type="journal article" date="2011" name="Mol. Cell">
        <title>Tyrosine phosphorylation of mitochondrial pyruvate dehydrogenase kinase 1 is important for cancer metabolism.</title>
        <authorList>
            <person name="Hitosugi T."/>
            <person name="Fan J."/>
            <person name="Chung T.W."/>
            <person name="Lythgoe K."/>
            <person name="Wang X."/>
            <person name="Xie J."/>
            <person name="Ge Q."/>
            <person name="Gu T.L."/>
            <person name="Polakiewicz R.D."/>
            <person name="Roesel J.L."/>
            <person name="Chen G.Z."/>
            <person name="Boggon T.J."/>
            <person name="Lonial S."/>
            <person name="Fu H."/>
            <person name="Khuri F.R."/>
            <person name="Kang S."/>
            <person name="Chen J."/>
        </authorList>
    </citation>
    <scope>CATALYTIC ACTIVITY</scope>
    <scope>FUNCTION</scope>
    <scope>SUBCELLULAR LOCATION</scope>
    <scope>PHOSPHORYLATION AT TYR-136; TYR-243 AND TYR-244</scope>
</reference>
<reference key="12">
    <citation type="journal article" date="2015" name="Proteomics">
        <title>N-terminome analysis of the human mitochondrial proteome.</title>
        <authorList>
            <person name="Vaca Jacome A.S."/>
            <person name="Rabilloud T."/>
            <person name="Schaeffer-Reiss C."/>
            <person name="Rompais M."/>
            <person name="Ayoub D."/>
            <person name="Lane L."/>
            <person name="Bairoch A."/>
            <person name="Van Dorsselaer A."/>
            <person name="Carapito C."/>
        </authorList>
    </citation>
    <scope>CLEAVAGE OF TRANSIT PEPTIDE [LARGE SCALE ANALYSIS] AFTER PHE-28</scope>
    <scope>IDENTIFICATION BY MASS SPECTROMETRY [LARGE SCALE ANALYSIS]</scope>
</reference>
<reference key="13">
    <citation type="journal article" date="2016" name="Cancer Cell">
        <title>Mitochondrial Akt regulation of hypoxic tumor reprogramming.</title>
        <authorList>
            <person name="Chae Y.C."/>
            <person name="Vaira V."/>
            <person name="Caino M.C."/>
            <person name="Tang H.Y."/>
            <person name="Seo J.H."/>
            <person name="Kossenkov A.V."/>
            <person name="Ottobrini L."/>
            <person name="Martelli C."/>
            <person name="Lucignani G."/>
            <person name="Bertolini I."/>
            <person name="Locatelli M."/>
            <person name="Bryant K.G."/>
            <person name="Ghosh J.C."/>
            <person name="Lisanti S."/>
            <person name="Ku B."/>
            <person name="Bosari S."/>
            <person name="Languino L.R."/>
            <person name="Speicher D.W."/>
            <person name="Altieri D.C."/>
        </authorList>
    </citation>
    <scope>ROLE IN HYPOXIC TUMOR SURVIVAL</scope>
</reference>
<reference key="14">
    <citation type="journal article" date="2016" name="Mol. Cell">
        <title>Mitochondria-Translocated PGK1 Functions as a Protein Kinase to Coordinate Glycolysis and the TCA Cycle in Tumorigenesis.</title>
        <authorList>
            <person name="Li X."/>
            <person name="Jiang Y."/>
            <person name="Meisenhelder J."/>
            <person name="Yang W."/>
            <person name="Hawke D.H."/>
            <person name="Zheng Y."/>
            <person name="Xia Y."/>
            <person name="Aldape K."/>
            <person name="He J."/>
            <person name="Hunter T."/>
            <person name="Wang L."/>
            <person name="Lu Z."/>
        </authorList>
    </citation>
    <scope>FUNCTION</scope>
    <scope>CATALYTIC ACTIVITY</scope>
    <scope>ACTIVITY REGULATION</scope>
    <scope>INTERACTION WITH PGK1</scope>
    <scope>PHOSPHORYLATION AT THR-338</scope>
</reference>
<reference key="15">
    <citation type="journal article" date="2007" name="Structure">
        <title>Distinct structural mechanisms for inhibition of pyruvate dehydrogenase kinase isoforms by AZD7545, dichloroacetate, and radicicol.</title>
        <authorList>
            <person name="Kato M."/>
            <person name="Li J."/>
            <person name="Chuang J.L."/>
            <person name="Chuang D.T."/>
        </authorList>
    </citation>
    <scope>X-RAY CRYSTALLOGRAPHY (1.9 ANGSTROMS) OF 30-436 IN COMPLEX WITH THE INHIBITORS AZD7545 AND DICHLOROACETATE</scope>
    <scope>FUNCTION</scope>
    <scope>SUBUNIT</scope>
    <scope>CATALYTIC ACTIVITY</scope>
    <scope>ACTIVITY REGULATION</scope>
</reference>
<reference key="16">
    <citation type="journal article" date="2007" name="Nature">
        <title>Patterns of somatic mutation in human cancer genomes.</title>
        <authorList>
            <person name="Greenman C."/>
            <person name="Stephens P."/>
            <person name="Smith R."/>
            <person name="Dalgliesh G.L."/>
            <person name="Hunter C."/>
            <person name="Bignell G."/>
            <person name="Davies H."/>
            <person name="Teague J."/>
            <person name="Butler A."/>
            <person name="Stevens C."/>
            <person name="Edkins S."/>
            <person name="O'Meara S."/>
            <person name="Vastrik I."/>
            <person name="Schmidt E.E."/>
            <person name="Avis T."/>
            <person name="Barthorpe S."/>
            <person name="Bhamra G."/>
            <person name="Buck G."/>
            <person name="Choudhury B."/>
            <person name="Clements J."/>
            <person name="Cole J."/>
            <person name="Dicks E."/>
            <person name="Forbes S."/>
            <person name="Gray K."/>
            <person name="Halliday K."/>
            <person name="Harrison R."/>
            <person name="Hills K."/>
            <person name="Hinton J."/>
            <person name="Jenkinson A."/>
            <person name="Jones D."/>
            <person name="Menzies A."/>
            <person name="Mironenko T."/>
            <person name="Perry J."/>
            <person name="Raine K."/>
            <person name="Richardson D."/>
            <person name="Shepherd R."/>
            <person name="Small A."/>
            <person name="Tofts C."/>
            <person name="Varian J."/>
            <person name="Webb T."/>
            <person name="West S."/>
            <person name="Widaa S."/>
            <person name="Yates A."/>
            <person name="Cahill D.P."/>
            <person name="Louis D.N."/>
            <person name="Goldstraw P."/>
            <person name="Nicholson A.G."/>
            <person name="Brasseur F."/>
            <person name="Looijenga L."/>
            <person name="Weber B.L."/>
            <person name="Chiew Y.-E."/>
            <person name="DeFazio A."/>
            <person name="Greaves M.F."/>
            <person name="Green A.R."/>
            <person name="Campbell P."/>
            <person name="Birney E."/>
            <person name="Easton D.F."/>
            <person name="Chenevix-Trench G."/>
            <person name="Tan M.-H."/>
            <person name="Khoo S.K."/>
            <person name="Teh B.T."/>
            <person name="Yuen S.T."/>
            <person name="Leung S.Y."/>
            <person name="Wooster R."/>
            <person name="Futreal P.A."/>
            <person name="Stratton M.R."/>
        </authorList>
    </citation>
    <scope>VARIANT [LARGE SCALE ANALYSIS] THR-412</scope>
</reference>
<dbReference type="EC" id="2.7.11.2" evidence="7 10 11 13"/>
<dbReference type="EMBL" id="L42450">
    <property type="protein sequence ID" value="AAC42009.1"/>
    <property type="molecule type" value="mRNA"/>
</dbReference>
<dbReference type="EMBL" id="DQ234350">
    <property type="protein sequence ID" value="ABB29979.1"/>
    <property type="molecule type" value="mRNA"/>
</dbReference>
<dbReference type="EMBL" id="AK304388">
    <property type="protein sequence ID" value="BAH14173.1"/>
    <property type="molecule type" value="mRNA"/>
</dbReference>
<dbReference type="EMBL" id="AK312700">
    <property type="protein sequence ID" value="BAG35578.1"/>
    <property type="molecule type" value="mRNA"/>
</dbReference>
<dbReference type="EMBL" id="AC018712">
    <property type="status" value="NOT_ANNOTATED_CDS"/>
    <property type="molecule type" value="Genomic_DNA"/>
</dbReference>
<dbReference type="EMBL" id="AC093818">
    <property type="status" value="NOT_ANNOTATED_CDS"/>
    <property type="molecule type" value="Genomic_DNA"/>
</dbReference>
<dbReference type="EMBL" id="CH471058">
    <property type="protein sequence ID" value="EAX11173.1"/>
    <property type="molecule type" value="Genomic_DNA"/>
</dbReference>
<dbReference type="EMBL" id="CH471058">
    <property type="protein sequence ID" value="EAX11174.1"/>
    <property type="molecule type" value="Genomic_DNA"/>
</dbReference>
<dbReference type="EMBL" id="BC039158">
    <property type="protein sequence ID" value="AAH39158.1"/>
    <property type="molecule type" value="mRNA"/>
</dbReference>
<dbReference type="CCDS" id="CCDS2250.1">
    <molecule id="Q15118-1"/>
</dbReference>
<dbReference type="CCDS" id="CCDS63059.1">
    <molecule id="Q15118-2"/>
</dbReference>
<dbReference type="PIR" id="I55465">
    <property type="entry name" value="I55465"/>
</dbReference>
<dbReference type="RefSeq" id="NP_001265478.1">
    <molecule id="Q15118-2"/>
    <property type="nucleotide sequence ID" value="NM_001278549.2"/>
</dbReference>
<dbReference type="RefSeq" id="NP_002601.1">
    <molecule id="Q15118-1"/>
    <property type="nucleotide sequence ID" value="NM_002610.5"/>
</dbReference>
<dbReference type="PDB" id="2Q8F">
    <property type="method" value="X-ray"/>
    <property type="resolution" value="2.03 A"/>
    <property type="chains" value="A=30-436"/>
</dbReference>
<dbReference type="PDB" id="2Q8G">
    <property type="method" value="X-ray"/>
    <property type="resolution" value="1.90 A"/>
    <property type="chains" value="A=30-436"/>
</dbReference>
<dbReference type="PDB" id="2Q8H">
    <property type="method" value="X-ray"/>
    <property type="resolution" value="2.00 A"/>
    <property type="chains" value="A=30-436"/>
</dbReference>
<dbReference type="PDBsum" id="2Q8F"/>
<dbReference type="PDBsum" id="2Q8G"/>
<dbReference type="PDBsum" id="2Q8H"/>
<dbReference type="SMR" id="Q15118"/>
<dbReference type="BioGRID" id="111189">
    <property type="interactions" value="361"/>
</dbReference>
<dbReference type="DIP" id="DIP-29497N"/>
<dbReference type="FunCoup" id="Q15118">
    <property type="interactions" value="1781"/>
</dbReference>
<dbReference type="IntAct" id="Q15118">
    <property type="interactions" value="319"/>
</dbReference>
<dbReference type="MINT" id="Q15118"/>
<dbReference type="STRING" id="9606.ENSP00000376352"/>
<dbReference type="BindingDB" id="Q15118"/>
<dbReference type="ChEMBL" id="CHEMBL4766"/>
<dbReference type="DrugBank" id="DB07403">
    <property type="generic name" value="4-[(3-CHLORO-4-{[(2R)-3,3,3-TRIFLUORO-2-HYDROXY-2-METHYLPROPANOYL]AMINO}PHENYL)SULFONYL]-N,N-DIMETHYLBENZAMIDE"/>
</dbReference>
<dbReference type="DrugBank" id="DB08809">
    <property type="generic name" value="Dichloroacetic acid"/>
</dbReference>
<dbReference type="DrugCentral" id="Q15118"/>
<dbReference type="GuidetoPHARMACOLOGY" id="2915"/>
<dbReference type="GlyGen" id="Q15118">
    <property type="glycosylation" value="2 sites, 1 O-linked glycan (2 sites)"/>
</dbReference>
<dbReference type="iPTMnet" id="Q15118"/>
<dbReference type="PhosphoSitePlus" id="Q15118"/>
<dbReference type="SwissPalm" id="Q15118"/>
<dbReference type="BioMuta" id="PDK1"/>
<dbReference type="DMDM" id="3183117"/>
<dbReference type="CPTAC" id="CPTAC-2843"/>
<dbReference type="CPTAC" id="CPTAC-2889"/>
<dbReference type="jPOST" id="Q15118"/>
<dbReference type="MassIVE" id="Q15118"/>
<dbReference type="PaxDb" id="9606-ENSP00000376352"/>
<dbReference type="PeptideAtlas" id="Q15118"/>
<dbReference type="ProteomicsDB" id="19593"/>
<dbReference type="ProteomicsDB" id="60444">
    <molecule id="Q15118-1"/>
</dbReference>
<dbReference type="Pumba" id="Q15118"/>
<dbReference type="Antibodypedia" id="4312">
    <property type="antibodies" value="690 antibodies from 40 providers"/>
</dbReference>
<dbReference type="DNASU" id="5163"/>
<dbReference type="Ensembl" id="ENST00000282077.8">
    <molecule id="Q15118-1"/>
    <property type="protein sequence ID" value="ENSP00000282077.3"/>
    <property type="gene ID" value="ENSG00000152256.14"/>
</dbReference>
<dbReference type="Ensembl" id="ENST00000392571.6">
    <molecule id="Q15118-2"/>
    <property type="protein sequence ID" value="ENSP00000376352.2"/>
    <property type="gene ID" value="ENSG00000152256.14"/>
</dbReference>
<dbReference type="Ensembl" id="ENST00000410055.5">
    <molecule id="Q15118-1"/>
    <property type="protein sequence ID" value="ENSP00000386985.1"/>
    <property type="gene ID" value="ENSG00000152256.14"/>
</dbReference>
<dbReference type="GeneID" id="5163"/>
<dbReference type="KEGG" id="hsa:5163"/>
<dbReference type="MANE-Select" id="ENST00000282077.8">
    <property type="protein sequence ID" value="ENSP00000282077.3"/>
    <property type="RefSeq nucleotide sequence ID" value="NM_002610.5"/>
    <property type="RefSeq protein sequence ID" value="NP_002601.1"/>
</dbReference>
<dbReference type="UCSC" id="uc002uhs.5">
    <molecule id="Q15118-1"/>
    <property type="organism name" value="human"/>
</dbReference>
<dbReference type="AGR" id="HGNC:8809"/>
<dbReference type="CTD" id="5163"/>
<dbReference type="DisGeNET" id="5163"/>
<dbReference type="GeneCards" id="PDK1"/>
<dbReference type="HGNC" id="HGNC:8809">
    <property type="gene designation" value="PDK1"/>
</dbReference>
<dbReference type="HPA" id="ENSG00000152256">
    <property type="expression patterns" value="Low tissue specificity"/>
</dbReference>
<dbReference type="MalaCards" id="PDK1"/>
<dbReference type="MIM" id="602524">
    <property type="type" value="gene"/>
</dbReference>
<dbReference type="neXtProt" id="NX_Q15118"/>
<dbReference type="OpenTargets" id="ENSG00000152256"/>
<dbReference type="PharmGKB" id="PA33154"/>
<dbReference type="VEuPathDB" id="HostDB:ENSG00000152256"/>
<dbReference type="eggNOG" id="KOG0787">
    <property type="taxonomic scope" value="Eukaryota"/>
</dbReference>
<dbReference type="GeneTree" id="ENSGT01030000234646"/>
<dbReference type="HOGENOM" id="CLU_023861_1_1_1"/>
<dbReference type="InParanoid" id="Q15118"/>
<dbReference type="OMA" id="AGHHISM"/>
<dbReference type="OrthoDB" id="241648at2759"/>
<dbReference type="PAN-GO" id="Q15118">
    <property type="GO annotations" value="4 GO annotations based on evolutionary models"/>
</dbReference>
<dbReference type="PhylomeDB" id="Q15118"/>
<dbReference type="TreeFam" id="TF314918"/>
<dbReference type="BRENDA" id="2.7.11.2">
    <property type="organism ID" value="2681"/>
</dbReference>
<dbReference type="PathwayCommons" id="Q15118"/>
<dbReference type="Reactome" id="R-HSA-204174">
    <property type="pathway name" value="Regulation of pyruvate dehydrogenase (PDH) complex"/>
</dbReference>
<dbReference type="Reactome" id="R-HSA-5362517">
    <property type="pathway name" value="Signaling by Retinoic Acid"/>
</dbReference>
<dbReference type="Reactome" id="R-HSA-9837999">
    <property type="pathway name" value="Mitochondrial protein degradation"/>
</dbReference>
<dbReference type="SignaLink" id="Q15118"/>
<dbReference type="SIGNOR" id="Q15118"/>
<dbReference type="BioGRID-ORCS" id="5163">
    <property type="hits" value="9 hits in 1202 CRISPR screens"/>
</dbReference>
<dbReference type="ChiTaRS" id="PDK1">
    <property type="organism name" value="human"/>
</dbReference>
<dbReference type="EvolutionaryTrace" id="Q15118"/>
<dbReference type="GeneWiki" id="Pyruvate_dehydrogenase_lipoamide_kinase_isozyme_1"/>
<dbReference type="GenomeRNAi" id="5163"/>
<dbReference type="Pharos" id="Q15118">
    <property type="development level" value="Tchem"/>
</dbReference>
<dbReference type="PRO" id="PR:Q15118"/>
<dbReference type="Proteomes" id="UP000005640">
    <property type="component" value="Chromosome 2"/>
</dbReference>
<dbReference type="RNAct" id="Q15118">
    <property type="molecule type" value="protein"/>
</dbReference>
<dbReference type="Bgee" id="ENSG00000152256">
    <property type="expression patterns" value="Expressed in secondary oocyte and 182 other cell types or tissues"/>
</dbReference>
<dbReference type="ExpressionAtlas" id="Q15118">
    <property type="expression patterns" value="baseline and differential"/>
</dbReference>
<dbReference type="GO" id="GO:0005759">
    <property type="term" value="C:mitochondrial matrix"/>
    <property type="evidence" value="ECO:0000304"/>
    <property type="project" value="Reactome"/>
</dbReference>
<dbReference type="GO" id="GO:0005739">
    <property type="term" value="C:mitochondrion"/>
    <property type="evidence" value="ECO:0006056"/>
    <property type="project" value="FlyBase"/>
</dbReference>
<dbReference type="GO" id="GO:0045254">
    <property type="term" value="C:pyruvate dehydrogenase complex"/>
    <property type="evidence" value="ECO:0007669"/>
    <property type="project" value="Ensembl"/>
</dbReference>
<dbReference type="GO" id="GO:0005524">
    <property type="term" value="F:ATP binding"/>
    <property type="evidence" value="ECO:0007669"/>
    <property type="project" value="UniProtKB-KW"/>
</dbReference>
<dbReference type="GO" id="GO:0004672">
    <property type="term" value="F:protein kinase activity"/>
    <property type="evidence" value="ECO:0000314"/>
    <property type="project" value="UniProtKB"/>
</dbReference>
<dbReference type="GO" id="GO:0004740">
    <property type="term" value="F:pyruvate dehydrogenase (acetyl-transferring) kinase activity"/>
    <property type="evidence" value="ECO:0000314"/>
    <property type="project" value="UniProtKB"/>
</dbReference>
<dbReference type="GO" id="GO:0008283">
    <property type="term" value="P:cell population proliferation"/>
    <property type="evidence" value="ECO:0000315"/>
    <property type="project" value="UniProtKB"/>
</dbReference>
<dbReference type="GO" id="GO:0006006">
    <property type="term" value="P:glucose metabolic process"/>
    <property type="evidence" value="ECO:0000304"/>
    <property type="project" value="ProtInc"/>
</dbReference>
<dbReference type="GO" id="GO:0097411">
    <property type="term" value="P:hypoxia-inducible factor-1alpha signaling pathway"/>
    <property type="evidence" value="ECO:0000315"/>
    <property type="project" value="UniProtKB"/>
</dbReference>
<dbReference type="GO" id="GO:0008631">
    <property type="term" value="P:intrinsic apoptotic signaling pathway in response to oxidative stress"/>
    <property type="evidence" value="ECO:0000315"/>
    <property type="project" value="UniProtKB"/>
</dbReference>
<dbReference type="GO" id="GO:0010510">
    <property type="term" value="P:regulation of acetyl-CoA biosynthetic process from pyruvate"/>
    <property type="evidence" value="ECO:0000318"/>
    <property type="project" value="GO_Central"/>
</dbReference>
<dbReference type="GO" id="GO:0010906">
    <property type="term" value="P:regulation of glucose metabolic process"/>
    <property type="evidence" value="ECO:0000315"/>
    <property type="project" value="UniProtKB"/>
</dbReference>
<dbReference type="CDD" id="cd16929">
    <property type="entry name" value="HATPase_PDK-like"/>
    <property type="match status" value="1"/>
</dbReference>
<dbReference type="FunFam" id="1.20.140.20:FF:000001">
    <property type="entry name" value="[Pyruvate dehydrogenase (acetyl-transferring)] kinase isozyme 2, mitochondrial"/>
    <property type="match status" value="1"/>
</dbReference>
<dbReference type="FunFam" id="3.30.565.10:FF:000007">
    <property type="entry name" value="Mitochondrial pyruvate dehydrogenase kinase isoform 2"/>
    <property type="match status" value="1"/>
</dbReference>
<dbReference type="Gene3D" id="1.20.140.20">
    <property type="entry name" value="Alpha-ketoacid/pyruvate dehydrogenase kinase, N-terminal domain"/>
    <property type="match status" value="1"/>
</dbReference>
<dbReference type="Gene3D" id="3.30.565.10">
    <property type="entry name" value="Histidine kinase-like ATPase, C-terminal domain"/>
    <property type="match status" value="1"/>
</dbReference>
<dbReference type="InterPro" id="IPR036784">
    <property type="entry name" value="AK/P_DHK_N_sf"/>
</dbReference>
<dbReference type="InterPro" id="IPR018955">
    <property type="entry name" value="BCDHK/PDK_N"/>
</dbReference>
<dbReference type="InterPro" id="IPR039028">
    <property type="entry name" value="BCKD/PDK"/>
</dbReference>
<dbReference type="InterPro" id="IPR036890">
    <property type="entry name" value="HATPase_C_sf"/>
</dbReference>
<dbReference type="InterPro" id="IPR005467">
    <property type="entry name" value="His_kinase_dom"/>
</dbReference>
<dbReference type="PANTHER" id="PTHR11947:SF14">
    <property type="entry name" value="[PYRUVATE DEHYDROGENASE (ACETYL-TRANSFERRING)] KINASE ISOZYME 1, MITOCHONDRIAL"/>
    <property type="match status" value="1"/>
</dbReference>
<dbReference type="PANTHER" id="PTHR11947">
    <property type="entry name" value="PYRUVATE DEHYDROGENASE KINASE"/>
    <property type="match status" value="1"/>
</dbReference>
<dbReference type="Pfam" id="PF10436">
    <property type="entry name" value="BCDHK_Adom3"/>
    <property type="match status" value="1"/>
</dbReference>
<dbReference type="Pfam" id="PF02518">
    <property type="entry name" value="HATPase_c"/>
    <property type="match status" value="1"/>
</dbReference>
<dbReference type="SMART" id="SM00387">
    <property type="entry name" value="HATPase_c"/>
    <property type="match status" value="1"/>
</dbReference>
<dbReference type="SUPFAM" id="SSF69012">
    <property type="entry name" value="alpha-ketoacid dehydrogenase kinase, N-terminal domain"/>
    <property type="match status" value="1"/>
</dbReference>
<dbReference type="SUPFAM" id="SSF55874">
    <property type="entry name" value="ATPase domain of HSP90 chaperone/DNA topoisomerase II/histidine kinase"/>
    <property type="match status" value="1"/>
</dbReference>
<dbReference type="PROSITE" id="PS50109">
    <property type="entry name" value="HIS_KIN"/>
    <property type="match status" value="1"/>
</dbReference>
<organism>
    <name type="scientific">Homo sapiens</name>
    <name type="common">Human</name>
    <dbReference type="NCBI Taxonomy" id="9606"/>
    <lineage>
        <taxon>Eukaryota</taxon>
        <taxon>Metazoa</taxon>
        <taxon>Chordata</taxon>
        <taxon>Craniata</taxon>
        <taxon>Vertebrata</taxon>
        <taxon>Euteleostomi</taxon>
        <taxon>Mammalia</taxon>
        <taxon>Eutheria</taxon>
        <taxon>Euarchontoglires</taxon>
        <taxon>Primates</taxon>
        <taxon>Haplorrhini</taxon>
        <taxon>Catarrhini</taxon>
        <taxon>Hominidae</taxon>
        <taxon>Homo</taxon>
    </lineage>
</organism>
<name>PDK1_HUMAN</name>
<keyword id="KW-0002">3D-structure</keyword>
<keyword id="KW-0025">Alternative splicing</keyword>
<keyword id="KW-0067">ATP-binding</keyword>
<keyword id="KW-0418">Kinase</keyword>
<keyword id="KW-0496">Mitochondrion</keyword>
<keyword id="KW-0547">Nucleotide-binding</keyword>
<keyword id="KW-0597">Phosphoprotein</keyword>
<keyword id="KW-1267">Proteomics identification</keyword>
<keyword id="KW-1185">Reference proteome</keyword>
<keyword id="KW-0808">Transferase</keyword>
<keyword id="KW-0809">Transit peptide</keyword>